<sequence length="61" mass="7146">MAKTSWKVKANRAPKFKVRAYTRCQLCGRSHSVLRKFRICRICFRVLAHQGRIPGIKKASW</sequence>
<proteinExistence type="inferred from homology"/>
<accession>Q601K1</accession>
<feature type="chain" id="PRO_0000269118" description="Small ribosomal subunit protein uS14">
    <location>
        <begin position="1"/>
        <end position="61"/>
    </location>
</feature>
<feature type="binding site" evidence="1">
    <location>
        <position position="24"/>
    </location>
    <ligand>
        <name>Zn(2+)</name>
        <dbReference type="ChEBI" id="CHEBI:29105"/>
    </ligand>
</feature>
<feature type="binding site" evidence="1">
    <location>
        <position position="27"/>
    </location>
    <ligand>
        <name>Zn(2+)</name>
        <dbReference type="ChEBI" id="CHEBI:29105"/>
    </ligand>
</feature>
<feature type="binding site" evidence="1">
    <location>
        <position position="40"/>
    </location>
    <ligand>
        <name>Zn(2+)</name>
        <dbReference type="ChEBI" id="CHEBI:29105"/>
    </ligand>
</feature>
<feature type="binding site" evidence="1">
    <location>
        <position position="43"/>
    </location>
    <ligand>
        <name>Zn(2+)</name>
        <dbReference type="ChEBI" id="CHEBI:29105"/>
    </ligand>
</feature>
<gene>
    <name evidence="1" type="primary">rpsZ</name>
    <name evidence="1" type="synonym">rpsN</name>
    <name type="ordered locus">mhp201</name>
</gene>
<evidence type="ECO:0000255" key="1">
    <source>
        <dbReference type="HAMAP-Rule" id="MF_01364"/>
    </source>
</evidence>
<evidence type="ECO:0000305" key="2"/>
<keyword id="KW-0479">Metal-binding</keyword>
<keyword id="KW-0687">Ribonucleoprotein</keyword>
<keyword id="KW-0689">Ribosomal protein</keyword>
<keyword id="KW-0694">RNA-binding</keyword>
<keyword id="KW-0699">rRNA-binding</keyword>
<keyword id="KW-0862">Zinc</keyword>
<comment type="function">
    <text evidence="1">Binds 16S rRNA, required for the assembly of 30S particles and may also be responsible for determining the conformation of the 16S rRNA at the A site.</text>
</comment>
<comment type="cofactor">
    <cofactor evidence="1">
        <name>Zn(2+)</name>
        <dbReference type="ChEBI" id="CHEBI:29105"/>
    </cofactor>
    <text evidence="1">Binds 1 zinc ion per subunit.</text>
</comment>
<comment type="subunit">
    <text evidence="1">Part of the 30S ribosomal subunit. Contacts proteins S3 and S10.</text>
</comment>
<comment type="similarity">
    <text evidence="1">Belongs to the universal ribosomal protein uS14 family. Zinc-binding uS14 subfamily.</text>
</comment>
<name>RS14Z_MESH2</name>
<reference key="1">
    <citation type="journal article" date="2004" name="J. Bacteriol.">
        <title>The genome sequence of Mycoplasma hyopneumoniae strain 232, the agent of swine mycoplasmosis.</title>
        <authorList>
            <person name="Minion F.C."/>
            <person name="Lefkowitz E.J."/>
            <person name="Madsen M.L."/>
            <person name="Cleary B.J."/>
            <person name="Swartzell S.M."/>
            <person name="Mahairas G.G."/>
        </authorList>
    </citation>
    <scope>NUCLEOTIDE SEQUENCE [LARGE SCALE GENOMIC DNA]</scope>
    <source>
        <strain>232</strain>
    </source>
</reference>
<protein>
    <recommendedName>
        <fullName evidence="1">Small ribosomal subunit protein uS14</fullName>
    </recommendedName>
    <alternativeName>
        <fullName evidence="2">30S ribosomal protein S14 type Z</fullName>
    </alternativeName>
</protein>
<organism>
    <name type="scientific">Mesomycoplasma hyopneumoniae (strain 232)</name>
    <name type="common">Mycoplasma hyopneumoniae</name>
    <dbReference type="NCBI Taxonomy" id="295358"/>
    <lineage>
        <taxon>Bacteria</taxon>
        <taxon>Bacillati</taxon>
        <taxon>Mycoplasmatota</taxon>
        <taxon>Mycoplasmoidales</taxon>
        <taxon>Metamycoplasmataceae</taxon>
        <taxon>Mesomycoplasma</taxon>
    </lineage>
</organism>
<dbReference type="EMBL" id="AE017332">
    <property type="protein sequence ID" value="AAV27457.1"/>
    <property type="molecule type" value="Genomic_DNA"/>
</dbReference>
<dbReference type="RefSeq" id="WP_011206038.1">
    <property type="nucleotide sequence ID" value="NC_006360.1"/>
</dbReference>
<dbReference type="SMR" id="Q601K1"/>
<dbReference type="GeneID" id="41334480"/>
<dbReference type="KEGG" id="mhy:mhp201"/>
<dbReference type="eggNOG" id="COG0199">
    <property type="taxonomic scope" value="Bacteria"/>
</dbReference>
<dbReference type="HOGENOM" id="CLU_139869_3_0_14"/>
<dbReference type="PhylomeDB" id="Q601K1"/>
<dbReference type="Proteomes" id="UP000006822">
    <property type="component" value="Chromosome"/>
</dbReference>
<dbReference type="GO" id="GO:0005737">
    <property type="term" value="C:cytoplasm"/>
    <property type="evidence" value="ECO:0007669"/>
    <property type="project" value="UniProtKB-ARBA"/>
</dbReference>
<dbReference type="GO" id="GO:0015935">
    <property type="term" value="C:small ribosomal subunit"/>
    <property type="evidence" value="ECO:0007669"/>
    <property type="project" value="TreeGrafter"/>
</dbReference>
<dbReference type="GO" id="GO:0019843">
    <property type="term" value="F:rRNA binding"/>
    <property type="evidence" value="ECO:0007669"/>
    <property type="project" value="UniProtKB-UniRule"/>
</dbReference>
<dbReference type="GO" id="GO:0003735">
    <property type="term" value="F:structural constituent of ribosome"/>
    <property type="evidence" value="ECO:0007669"/>
    <property type="project" value="InterPro"/>
</dbReference>
<dbReference type="GO" id="GO:0008270">
    <property type="term" value="F:zinc ion binding"/>
    <property type="evidence" value="ECO:0007669"/>
    <property type="project" value="UniProtKB-UniRule"/>
</dbReference>
<dbReference type="GO" id="GO:0006412">
    <property type="term" value="P:translation"/>
    <property type="evidence" value="ECO:0007669"/>
    <property type="project" value="UniProtKB-UniRule"/>
</dbReference>
<dbReference type="FunFam" id="4.10.830.10:FF:000001">
    <property type="entry name" value="30S ribosomal protein S14 type Z"/>
    <property type="match status" value="1"/>
</dbReference>
<dbReference type="Gene3D" id="4.10.830.10">
    <property type="entry name" value="30s Ribosomal Protein S14, Chain N"/>
    <property type="match status" value="1"/>
</dbReference>
<dbReference type="HAMAP" id="MF_01364_B">
    <property type="entry name" value="Ribosomal_uS14_2_B"/>
    <property type="match status" value="1"/>
</dbReference>
<dbReference type="InterPro" id="IPR001209">
    <property type="entry name" value="Ribosomal_uS14"/>
</dbReference>
<dbReference type="InterPro" id="IPR023053">
    <property type="entry name" value="Ribosomal_uS14_bact"/>
</dbReference>
<dbReference type="InterPro" id="IPR018271">
    <property type="entry name" value="Ribosomal_uS14_CS"/>
</dbReference>
<dbReference type="InterPro" id="IPR043140">
    <property type="entry name" value="Ribosomal_uS14_sf"/>
</dbReference>
<dbReference type="NCBIfam" id="NF005974">
    <property type="entry name" value="PRK08061.1"/>
    <property type="match status" value="1"/>
</dbReference>
<dbReference type="PANTHER" id="PTHR19836">
    <property type="entry name" value="30S RIBOSOMAL PROTEIN S14"/>
    <property type="match status" value="1"/>
</dbReference>
<dbReference type="PANTHER" id="PTHR19836:SF19">
    <property type="entry name" value="SMALL RIBOSOMAL SUBUNIT PROTEIN US14M"/>
    <property type="match status" value="1"/>
</dbReference>
<dbReference type="Pfam" id="PF00253">
    <property type="entry name" value="Ribosomal_S14"/>
    <property type="match status" value="1"/>
</dbReference>
<dbReference type="SUPFAM" id="SSF57716">
    <property type="entry name" value="Glucocorticoid receptor-like (DNA-binding domain)"/>
    <property type="match status" value="1"/>
</dbReference>
<dbReference type="PROSITE" id="PS00527">
    <property type="entry name" value="RIBOSOMAL_S14"/>
    <property type="match status" value="1"/>
</dbReference>